<name>CIPK5_ORYSJ</name>
<comment type="function">
    <text evidence="1">CIPK serine-threonine protein kinases interact with CBL proteins. Binding of a CBL protein to the regulatory NAF domain of CIPK protein lead to the activation of the kinase in a calcium-dependent manner (By similarity).</text>
</comment>
<comment type="catalytic activity">
    <reaction>
        <text>L-seryl-[protein] + ATP = O-phospho-L-seryl-[protein] + ADP + H(+)</text>
        <dbReference type="Rhea" id="RHEA:17989"/>
        <dbReference type="Rhea" id="RHEA-COMP:9863"/>
        <dbReference type="Rhea" id="RHEA-COMP:11604"/>
        <dbReference type="ChEBI" id="CHEBI:15378"/>
        <dbReference type="ChEBI" id="CHEBI:29999"/>
        <dbReference type="ChEBI" id="CHEBI:30616"/>
        <dbReference type="ChEBI" id="CHEBI:83421"/>
        <dbReference type="ChEBI" id="CHEBI:456216"/>
        <dbReference type="EC" id="2.7.11.1"/>
    </reaction>
</comment>
<comment type="catalytic activity">
    <reaction>
        <text>L-threonyl-[protein] + ATP = O-phospho-L-threonyl-[protein] + ADP + H(+)</text>
        <dbReference type="Rhea" id="RHEA:46608"/>
        <dbReference type="Rhea" id="RHEA-COMP:11060"/>
        <dbReference type="Rhea" id="RHEA-COMP:11605"/>
        <dbReference type="ChEBI" id="CHEBI:15378"/>
        <dbReference type="ChEBI" id="CHEBI:30013"/>
        <dbReference type="ChEBI" id="CHEBI:30616"/>
        <dbReference type="ChEBI" id="CHEBI:61977"/>
        <dbReference type="ChEBI" id="CHEBI:456216"/>
        <dbReference type="EC" id="2.7.11.1"/>
    </reaction>
</comment>
<comment type="cofactor">
    <cofactor evidence="1">
        <name>Mn(2+)</name>
        <dbReference type="ChEBI" id="CHEBI:29035"/>
    </cofactor>
</comment>
<comment type="induction">
    <text evidence="6">By drought stress and abscisic acid (ABA).</text>
</comment>
<comment type="domain">
    <text evidence="1">The activation loop within the kinase domain is the target of phosphorylation/activation by upstream protein kinases. The PPI motif mediates the interaction with the ABI (abscisic acid-insensitive) phosphatases (By similarity).</text>
</comment>
<comment type="similarity">
    <text evidence="7">Belongs to the protein kinase superfamily. CAMK Ser/Thr protein kinase family. SNF1 subfamily.</text>
</comment>
<keyword id="KW-0067">ATP-binding</keyword>
<keyword id="KW-0418">Kinase</keyword>
<keyword id="KW-0464">Manganese</keyword>
<keyword id="KW-0547">Nucleotide-binding</keyword>
<keyword id="KW-1185">Reference proteome</keyword>
<keyword id="KW-0723">Serine/threonine-protein kinase</keyword>
<keyword id="KW-0808">Transferase</keyword>
<organism>
    <name type="scientific">Oryza sativa subsp. japonica</name>
    <name type="common">Rice</name>
    <dbReference type="NCBI Taxonomy" id="39947"/>
    <lineage>
        <taxon>Eukaryota</taxon>
        <taxon>Viridiplantae</taxon>
        <taxon>Streptophyta</taxon>
        <taxon>Embryophyta</taxon>
        <taxon>Tracheophyta</taxon>
        <taxon>Spermatophyta</taxon>
        <taxon>Magnoliopsida</taxon>
        <taxon>Liliopsida</taxon>
        <taxon>Poales</taxon>
        <taxon>Poaceae</taxon>
        <taxon>BOP clade</taxon>
        <taxon>Oryzoideae</taxon>
        <taxon>Oryzeae</taxon>
        <taxon>Oryzinae</taxon>
        <taxon>Oryza</taxon>
        <taxon>Oryza sativa</taxon>
    </lineage>
</organism>
<reference key="1">
    <citation type="journal article" date="2002" name="Nature">
        <title>The genome sequence and structure of rice chromosome 1.</title>
        <authorList>
            <person name="Sasaki T."/>
            <person name="Matsumoto T."/>
            <person name="Yamamoto K."/>
            <person name="Sakata K."/>
            <person name="Baba T."/>
            <person name="Katayose Y."/>
            <person name="Wu J."/>
            <person name="Niimura Y."/>
            <person name="Cheng Z."/>
            <person name="Nagamura Y."/>
            <person name="Antonio B.A."/>
            <person name="Kanamori H."/>
            <person name="Hosokawa S."/>
            <person name="Masukawa M."/>
            <person name="Arikawa K."/>
            <person name="Chiden Y."/>
            <person name="Hayashi M."/>
            <person name="Okamoto M."/>
            <person name="Ando T."/>
            <person name="Aoki H."/>
            <person name="Arita K."/>
            <person name="Hamada M."/>
            <person name="Harada C."/>
            <person name="Hijishita S."/>
            <person name="Honda M."/>
            <person name="Ichikawa Y."/>
            <person name="Idonuma A."/>
            <person name="Iijima M."/>
            <person name="Ikeda M."/>
            <person name="Ikeno M."/>
            <person name="Ito S."/>
            <person name="Ito T."/>
            <person name="Ito Y."/>
            <person name="Ito Y."/>
            <person name="Iwabuchi A."/>
            <person name="Kamiya K."/>
            <person name="Karasawa W."/>
            <person name="Katagiri S."/>
            <person name="Kikuta A."/>
            <person name="Kobayashi N."/>
            <person name="Kono I."/>
            <person name="Machita K."/>
            <person name="Maehara T."/>
            <person name="Mizuno H."/>
            <person name="Mizubayashi T."/>
            <person name="Mukai Y."/>
            <person name="Nagasaki H."/>
            <person name="Nakashima M."/>
            <person name="Nakama Y."/>
            <person name="Nakamichi Y."/>
            <person name="Nakamura M."/>
            <person name="Namiki N."/>
            <person name="Negishi M."/>
            <person name="Ohta I."/>
            <person name="Ono N."/>
            <person name="Saji S."/>
            <person name="Sakai K."/>
            <person name="Shibata M."/>
            <person name="Shimokawa T."/>
            <person name="Shomura A."/>
            <person name="Song J."/>
            <person name="Takazaki Y."/>
            <person name="Terasawa K."/>
            <person name="Tsuji K."/>
            <person name="Waki K."/>
            <person name="Yamagata H."/>
            <person name="Yamane H."/>
            <person name="Yoshiki S."/>
            <person name="Yoshihara R."/>
            <person name="Yukawa K."/>
            <person name="Zhong H."/>
            <person name="Iwama H."/>
            <person name="Endo T."/>
            <person name="Ito H."/>
            <person name="Hahn J.H."/>
            <person name="Kim H.-I."/>
            <person name="Eun M.-Y."/>
            <person name="Yano M."/>
            <person name="Jiang J."/>
            <person name="Gojobori T."/>
        </authorList>
    </citation>
    <scope>NUCLEOTIDE SEQUENCE [LARGE SCALE GENOMIC DNA]</scope>
    <source>
        <strain>cv. Nipponbare</strain>
    </source>
</reference>
<reference key="2">
    <citation type="journal article" date="2005" name="Nature">
        <title>The map-based sequence of the rice genome.</title>
        <authorList>
            <consortium name="International rice genome sequencing project (IRGSP)"/>
        </authorList>
    </citation>
    <scope>NUCLEOTIDE SEQUENCE [LARGE SCALE GENOMIC DNA]</scope>
    <source>
        <strain>cv. Nipponbare</strain>
    </source>
</reference>
<reference key="3">
    <citation type="journal article" date="2008" name="Nucleic Acids Res.">
        <title>The rice annotation project database (RAP-DB): 2008 update.</title>
        <authorList>
            <consortium name="The rice annotation project (RAP)"/>
        </authorList>
    </citation>
    <scope>GENOME REANNOTATION</scope>
    <source>
        <strain>cv. Nipponbare</strain>
    </source>
</reference>
<reference key="4">
    <citation type="journal article" date="2013" name="Rice">
        <title>Improvement of the Oryza sativa Nipponbare reference genome using next generation sequence and optical map data.</title>
        <authorList>
            <person name="Kawahara Y."/>
            <person name="de la Bastide M."/>
            <person name="Hamilton J.P."/>
            <person name="Kanamori H."/>
            <person name="McCombie W.R."/>
            <person name="Ouyang S."/>
            <person name="Schwartz D.C."/>
            <person name="Tanaka T."/>
            <person name="Wu J."/>
            <person name="Zhou S."/>
            <person name="Childs K.L."/>
            <person name="Davidson R.M."/>
            <person name="Lin H."/>
            <person name="Quesada-Ocampo L."/>
            <person name="Vaillancourt B."/>
            <person name="Sakai H."/>
            <person name="Lee S.S."/>
            <person name="Kim J."/>
            <person name="Numa H."/>
            <person name="Itoh T."/>
            <person name="Buell C.R."/>
            <person name="Matsumoto T."/>
        </authorList>
    </citation>
    <scope>GENOME REANNOTATION</scope>
    <source>
        <strain>cv. Nipponbare</strain>
    </source>
</reference>
<reference key="5">
    <citation type="journal article" date="2005" name="PLoS Biol.">
        <title>The genomes of Oryza sativa: a history of duplications.</title>
        <authorList>
            <person name="Yu J."/>
            <person name="Wang J."/>
            <person name="Lin W."/>
            <person name="Li S."/>
            <person name="Li H."/>
            <person name="Zhou J."/>
            <person name="Ni P."/>
            <person name="Dong W."/>
            <person name="Hu S."/>
            <person name="Zeng C."/>
            <person name="Zhang J."/>
            <person name="Zhang Y."/>
            <person name="Li R."/>
            <person name="Xu Z."/>
            <person name="Li S."/>
            <person name="Li X."/>
            <person name="Zheng H."/>
            <person name="Cong L."/>
            <person name="Lin L."/>
            <person name="Yin J."/>
            <person name="Geng J."/>
            <person name="Li G."/>
            <person name="Shi J."/>
            <person name="Liu J."/>
            <person name="Lv H."/>
            <person name="Li J."/>
            <person name="Wang J."/>
            <person name="Deng Y."/>
            <person name="Ran L."/>
            <person name="Shi X."/>
            <person name="Wang X."/>
            <person name="Wu Q."/>
            <person name="Li C."/>
            <person name="Ren X."/>
            <person name="Wang J."/>
            <person name="Wang X."/>
            <person name="Li D."/>
            <person name="Liu D."/>
            <person name="Zhang X."/>
            <person name="Ji Z."/>
            <person name="Zhao W."/>
            <person name="Sun Y."/>
            <person name="Zhang Z."/>
            <person name="Bao J."/>
            <person name="Han Y."/>
            <person name="Dong L."/>
            <person name="Ji J."/>
            <person name="Chen P."/>
            <person name="Wu S."/>
            <person name="Liu J."/>
            <person name="Xiao Y."/>
            <person name="Bu D."/>
            <person name="Tan J."/>
            <person name="Yang L."/>
            <person name="Ye C."/>
            <person name="Zhang J."/>
            <person name="Xu J."/>
            <person name="Zhou Y."/>
            <person name="Yu Y."/>
            <person name="Zhang B."/>
            <person name="Zhuang S."/>
            <person name="Wei H."/>
            <person name="Liu B."/>
            <person name="Lei M."/>
            <person name="Yu H."/>
            <person name="Li Y."/>
            <person name="Xu H."/>
            <person name="Wei S."/>
            <person name="He X."/>
            <person name="Fang L."/>
            <person name="Zhang Z."/>
            <person name="Zhang Y."/>
            <person name="Huang X."/>
            <person name="Su Z."/>
            <person name="Tong W."/>
            <person name="Li J."/>
            <person name="Tong Z."/>
            <person name="Li S."/>
            <person name="Ye J."/>
            <person name="Wang L."/>
            <person name="Fang L."/>
            <person name="Lei T."/>
            <person name="Chen C.-S."/>
            <person name="Chen H.-C."/>
            <person name="Xu Z."/>
            <person name="Li H."/>
            <person name="Huang H."/>
            <person name="Zhang F."/>
            <person name="Xu H."/>
            <person name="Li N."/>
            <person name="Zhao C."/>
            <person name="Li S."/>
            <person name="Dong L."/>
            <person name="Huang Y."/>
            <person name="Li L."/>
            <person name="Xi Y."/>
            <person name="Qi Q."/>
            <person name="Li W."/>
            <person name="Zhang B."/>
            <person name="Hu W."/>
            <person name="Zhang Y."/>
            <person name="Tian X."/>
            <person name="Jiao Y."/>
            <person name="Liang X."/>
            <person name="Jin J."/>
            <person name="Gao L."/>
            <person name="Zheng W."/>
            <person name="Hao B."/>
            <person name="Liu S.-M."/>
            <person name="Wang W."/>
            <person name="Yuan L."/>
            <person name="Cao M."/>
            <person name="McDermott J."/>
            <person name="Samudrala R."/>
            <person name="Wang J."/>
            <person name="Wong G.K.-S."/>
            <person name="Yang H."/>
        </authorList>
    </citation>
    <scope>NUCLEOTIDE SEQUENCE [LARGE SCALE GENOMIC DNA]</scope>
    <source>
        <strain>cv. Nipponbare</strain>
    </source>
</reference>
<reference key="6">
    <citation type="journal article" date="2003" name="Science">
        <title>Collection, mapping, and annotation of over 28,000 cDNA clones from japonica rice.</title>
        <authorList>
            <consortium name="The rice full-length cDNA consortium"/>
        </authorList>
    </citation>
    <scope>NUCLEOTIDE SEQUENCE [LARGE SCALE MRNA]</scope>
    <source>
        <strain>cv. Nipponbare</strain>
    </source>
</reference>
<reference key="7">
    <citation type="journal article" date="2004" name="Plant Physiol.">
        <title>Calcium sensors and their interacting protein kinases: genomics of the Arabidopsis and rice CBL-CIPK signaling networks.</title>
        <authorList>
            <person name="Kolukisaoglu U."/>
            <person name="Weinl S."/>
            <person name="Blazevic D."/>
            <person name="Batistic O."/>
            <person name="Kudla J."/>
        </authorList>
    </citation>
    <scope>GENE FAMILY</scope>
    <scope>NOMENCLATURE</scope>
</reference>
<reference key="8">
    <citation type="journal article" date="2007" name="Plant Physiol.">
        <title>Characterization of stress-responsive CIPK genes in rice for stress tolerance improvement.</title>
        <authorList>
            <person name="Xiang Y."/>
            <person name="Huang Y."/>
            <person name="Xiong L."/>
        </authorList>
    </citation>
    <scope>INDUCTION</scope>
</reference>
<accession>Q9LWM4</accession>
<dbReference type="EC" id="2.7.11.1"/>
<dbReference type="EMBL" id="AP001551">
    <property type="protein sequence ID" value="BAA92972.1"/>
    <property type="molecule type" value="Genomic_DNA"/>
</dbReference>
<dbReference type="EMBL" id="AP003052">
    <property type="protein sequence ID" value="BAB92151.1"/>
    <property type="molecule type" value="Genomic_DNA"/>
</dbReference>
<dbReference type="EMBL" id="AP008207">
    <property type="protein sequence ID" value="BAF04259.1"/>
    <property type="molecule type" value="Genomic_DNA"/>
</dbReference>
<dbReference type="EMBL" id="AP014957">
    <property type="protein sequence ID" value="BAS70946.1"/>
    <property type="molecule type" value="Genomic_DNA"/>
</dbReference>
<dbReference type="EMBL" id="CM000138">
    <property type="protein sequence ID" value="EAZ10972.1"/>
    <property type="molecule type" value="Genomic_DNA"/>
</dbReference>
<dbReference type="EMBL" id="AK065589">
    <property type="status" value="NOT_ANNOTATED_CDS"/>
    <property type="molecule type" value="mRNA"/>
</dbReference>
<dbReference type="RefSeq" id="XP_015621591.1">
    <property type="nucleotide sequence ID" value="XM_015766105.1"/>
</dbReference>
<dbReference type="SMR" id="Q9LWM4"/>
<dbReference type="FunCoup" id="Q9LWM4">
    <property type="interactions" value="520"/>
</dbReference>
<dbReference type="STRING" id="39947.Q9LWM4"/>
<dbReference type="PaxDb" id="39947-Q9LWM4"/>
<dbReference type="EnsemblPlants" id="Os01t0206700-01">
    <property type="protein sequence ID" value="Os01t0206700-01"/>
    <property type="gene ID" value="Os01g0206700"/>
</dbReference>
<dbReference type="EnsemblPlants" id="Os01t0206700-03">
    <property type="protein sequence ID" value="Os01t0206700-03"/>
    <property type="gene ID" value="Os01g0206700"/>
</dbReference>
<dbReference type="Gramene" id="Os01t0206700-01">
    <property type="protein sequence ID" value="Os01t0206700-01"/>
    <property type="gene ID" value="Os01g0206700"/>
</dbReference>
<dbReference type="Gramene" id="Os01t0206700-03">
    <property type="protein sequence ID" value="Os01t0206700-03"/>
    <property type="gene ID" value="Os01g0206700"/>
</dbReference>
<dbReference type="KEGG" id="dosa:Os01g0206700"/>
<dbReference type="eggNOG" id="KOG0583">
    <property type="taxonomic scope" value="Eukaryota"/>
</dbReference>
<dbReference type="HOGENOM" id="CLU_000288_59_0_1"/>
<dbReference type="InParanoid" id="Q9LWM4"/>
<dbReference type="OMA" id="NDICWNG"/>
<dbReference type="OrthoDB" id="193931at2759"/>
<dbReference type="Proteomes" id="UP000000763">
    <property type="component" value="Chromosome 1"/>
</dbReference>
<dbReference type="Proteomes" id="UP000007752">
    <property type="component" value="Chromosome 1"/>
</dbReference>
<dbReference type="Proteomes" id="UP000059680">
    <property type="component" value="Chromosome 1"/>
</dbReference>
<dbReference type="ExpressionAtlas" id="Q9LWM4">
    <property type="expression patterns" value="baseline and differential"/>
</dbReference>
<dbReference type="GO" id="GO:0005524">
    <property type="term" value="F:ATP binding"/>
    <property type="evidence" value="ECO:0007669"/>
    <property type="project" value="UniProtKB-KW"/>
</dbReference>
<dbReference type="GO" id="GO:0106310">
    <property type="term" value="F:protein serine kinase activity"/>
    <property type="evidence" value="ECO:0007669"/>
    <property type="project" value="RHEA"/>
</dbReference>
<dbReference type="GO" id="GO:0004674">
    <property type="term" value="F:protein serine/threonine kinase activity"/>
    <property type="evidence" value="ECO:0000318"/>
    <property type="project" value="GO_Central"/>
</dbReference>
<dbReference type="GO" id="GO:0007165">
    <property type="term" value="P:signal transduction"/>
    <property type="evidence" value="ECO:0000318"/>
    <property type="project" value="GO_Central"/>
</dbReference>
<dbReference type="CDD" id="cd12195">
    <property type="entry name" value="CIPK_C"/>
    <property type="match status" value="1"/>
</dbReference>
<dbReference type="CDD" id="cd14663">
    <property type="entry name" value="STKc_SnRK3"/>
    <property type="match status" value="1"/>
</dbReference>
<dbReference type="FunFam" id="1.10.510.10:FF:000653">
    <property type="entry name" value="Non-specific serine/threonine protein kinase"/>
    <property type="match status" value="1"/>
</dbReference>
<dbReference type="FunFam" id="3.30.200.20:FF:000096">
    <property type="entry name" value="Non-specific serine/threonine protein kinase"/>
    <property type="match status" value="1"/>
</dbReference>
<dbReference type="FunFam" id="3.30.310.80:FF:000005">
    <property type="entry name" value="Non-specific serine/threonine protein kinase"/>
    <property type="match status" value="1"/>
</dbReference>
<dbReference type="Gene3D" id="3.30.310.80">
    <property type="entry name" value="Kinase associated domain 1, KA1"/>
    <property type="match status" value="1"/>
</dbReference>
<dbReference type="Gene3D" id="3.30.200.20">
    <property type="entry name" value="Phosphorylase Kinase, domain 1"/>
    <property type="match status" value="1"/>
</dbReference>
<dbReference type="Gene3D" id="1.10.510.10">
    <property type="entry name" value="Transferase(Phosphotransferase) domain 1"/>
    <property type="match status" value="1"/>
</dbReference>
<dbReference type="InterPro" id="IPR011009">
    <property type="entry name" value="Kinase-like_dom_sf"/>
</dbReference>
<dbReference type="InterPro" id="IPR018451">
    <property type="entry name" value="NAF/FISL_domain"/>
</dbReference>
<dbReference type="InterPro" id="IPR004041">
    <property type="entry name" value="NAF_dom"/>
</dbReference>
<dbReference type="InterPro" id="IPR000719">
    <property type="entry name" value="Prot_kinase_dom"/>
</dbReference>
<dbReference type="InterPro" id="IPR017441">
    <property type="entry name" value="Protein_kinase_ATP_BS"/>
</dbReference>
<dbReference type="InterPro" id="IPR008271">
    <property type="entry name" value="Ser/Thr_kinase_AS"/>
</dbReference>
<dbReference type="PANTHER" id="PTHR43895">
    <property type="entry name" value="CALCIUM/CALMODULIN-DEPENDENT PROTEIN KINASE KINASE-RELATED"/>
    <property type="match status" value="1"/>
</dbReference>
<dbReference type="PANTHER" id="PTHR43895:SF139">
    <property type="entry name" value="CBL-INTERACTING PROTEIN KINASE 5"/>
    <property type="match status" value="1"/>
</dbReference>
<dbReference type="Pfam" id="PF03822">
    <property type="entry name" value="NAF"/>
    <property type="match status" value="1"/>
</dbReference>
<dbReference type="Pfam" id="PF00069">
    <property type="entry name" value="Pkinase"/>
    <property type="match status" value="1"/>
</dbReference>
<dbReference type="SMART" id="SM00220">
    <property type="entry name" value="S_TKc"/>
    <property type="match status" value="1"/>
</dbReference>
<dbReference type="SUPFAM" id="SSF56112">
    <property type="entry name" value="Protein kinase-like (PK-like)"/>
    <property type="match status" value="1"/>
</dbReference>
<dbReference type="PROSITE" id="PS50816">
    <property type="entry name" value="NAF"/>
    <property type="match status" value="1"/>
</dbReference>
<dbReference type="PROSITE" id="PS00107">
    <property type="entry name" value="PROTEIN_KINASE_ATP"/>
    <property type="match status" value="1"/>
</dbReference>
<dbReference type="PROSITE" id="PS50011">
    <property type="entry name" value="PROTEIN_KINASE_DOM"/>
    <property type="match status" value="1"/>
</dbReference>
<dbReference type="PROSITE" id="PS00108">
    <property type="entry name" value="PROTEIN_KINASE_ST"/>
    <property type="match status" value="1"/>
</dbReference>
<gene>
    <name type="primary">CIPK5</name>
    <name type="ordered locus">Os01g0206700</name>
    <name type="ordered locus">LOC_Os01g10890</name>
    <name type="ORF">OsJ_000797</name>
    <name type="ORF">OSJNBa0016I09.5</name>
    <name type="ORF">P0451C06.36</name>
</gene>
<evidence type="ECO:0000250" key="1"/>
<evidence type="ECO:0000255" key="2">
    <source>
        <dbReference type="PROSITE-ProRule" id="PRU00159"/>
    </source>
</evidence>
<evidence type="ECO:0000255" key="3">
    <source>
        <dbReference type="PROSITE-ProRule" id="PRU00256"/>
    </source>
</evidence>
<evidence type="ECO:0000255" key="4">
    <source>
        <dbReference type="PROSITE-ProRule" id="PRU10027"/>
    </source>
</evidence>
<evidence type="ECO:0000256" key="5">
    <source>
        <dbReference type="SAM" id="MobiDB-lite"/>
    </source>
</evidence>
<evidence type="ECO:0000269" key="6">
    <source>
    </source>
</evidence>
<evidence type="ECO:0000305" key="7"/>
<sequence length="461" mass="51966">MEKKASILMNRYELGRMLGQGTFAKVYHARNLASNQSVAIKVIDKEKVLRVGMIDQIKREISIMRLVRHPNIVQLHEVMASKSKIYFAMEYVRGGELFSRVARGRLKEDAARKYFQQLIGAVDFCHSRGVYHRDLKPENLLVDENGNLKVSDFGLSAFKECQKQDGLLHTTCGTPAYVAPEIINKRGYDGAKADIWSCGVILFVLLAGYLPFHDSNLMEMYRKISKGDVKFPQWFTTDVRRLLSRLLDPNPNIRITVEKLVEHPWFKKGYKPAVMLSQPNESNNLKDVHTAFSADHKDNEGKAKEPASSLKPVSLNAFDIISLSKGFDLSGLFENDKEQKADSRFMTQKPASAIVSKLEQIAETESFKVKKQDGLVKLQGSKEGRKGQLAIDAEIFEVTPSFFVVEVKKSAGDTLEYEKFCNKGLRPSLRDICWDGQSEHPSLAQSSTLTQSSKSISRHAI</sequence>
<proteinExistence type="evidence at transcript level"/>
<protein>
    <recommendedName>
        <fullName>CBL-interacting protein kinase 5</fullName>
        <ecNumber>2.7.11.1</ecNumber>
    </recommendedName>
    <alternativeName>
        <fullName>OsCIPK05</fullName>
    </alternativeName>
</protein>
<feature type="chain" id="PRO_0000338363" description="CBL-interacting protein kinase 5">
    <location>
        <begin position="1"/>
        <end position="461"/>
    </location>
</feature>
<feature type="domain" description="Protein kinase" evidence="2">
    <location>
        <begin position="12"/>
        <end position="266"/>
    </location>
</feature>
<feature type="domain" description="NAF" evidence="3">
    <location>
        <begin position="300"/>
        <end position="334"/>
    </location>
</feature>
<feature type="region of interest" description="Activation loop" evidence="1">
    <location>
        <begin position="152"/>
        <end position="181"/>
    </location>
</feature>
<feature type="region of interest" description="PPI" evidence="1">
    <location>
        <begin position="340"/>
        <end position="369"/>
    </location>
</feature>
<feature type="region of interest" description="Disordered" evidence="5">
    <location>
        <begin position="440"/>
        <end position="461"/>
    </location>
</feature>
<feature type="compositionally biased region" description="Low complexity" evidence="5">
    <location>
        <begin position="442"/>
        <end position="455"/>
    </location>
</feature>
<feature type="active site" description="Proton acceptor" evidence="2 4">
    <location>
        <position position="134"/>
    </location>
</feature>
<feature type="binding site" evidence="2">
    <location>
        <begin position="18"/>
        <end position="26"/>
    </location>
    <ligand>
        <name>ATP</name>
        <dbReference type="ChEBI" id="CHEBI:30616"/>
    </ligand>
</feature>
<feature type="binding site" evidence="2">
    <location>
        <position position="41"/>
    </location>
    <ligand>
        <name>ATP</name>
        <dbReference type="ChEBI" id="CHEBI:30616"/>
    </ligand>
</feature>